<reference key="1">
    <citation type="journal article" date="2006" name="Plant Cell">
        <title>Silencing threonine deaminase and JAR4 in Nicotiana attenuata impairs jasmonic acid-isoleucine-mediated defenses against Manduca sexta.</title>
        <authorList>
            <person name="Kang J.H."/>
            <person name="Wang L."/>
            <person name="Giri A."/>
            <person name="Baldwin I.T."/>
        </authorList>
    </citation>
    <scope>NUCLEOTIDE SEQUENCE [MRNA]</scope>
    <scope>FUNCTION</scope>
    <scope>CATALYTIC ACTIVITY</scope>
    <scope>INDUCTION</scope>
</reference>
<reference key="2">
    <citation type="journal article" date="2017" name="Proc. Natl. Acad. Sci. U.S.A.">
        <title>Wild tobacco genomes reveal the evolution of nicotine biosynthesis.</title>
        <authorList>
            <person name="Xu S."/>
            <person name="Brockmoeller T."/>
            <person name="Navarro-Quezada A."/>
            <person name="Kuhl H."/>
            <person name="Gase K."/>
            <person name="Ling Z."/>
            <person name="Zhou W."/>
            <person name="Kreitzer C."/>
            <person name="Stanke M."/>
            <person name="Tang H."/>
            <person name="Lyons E."/>
            <person name="Pandey P."/>
            <person name="Pandey S.P."/>
            <person name="Timmermann B."/>
            <person name="Gaquerel E."/>
            <person name="Baldwin I.T."/>
        </authorList>
    </citation>
    <scope>NUCLEOTIDE SEQUENCE [LARGE SCALE GENOMIC DNA]</scope>
</reference>
<reference key="3">
    <citation type="journal article" date="2007" name="Planta">
        <title>Independently silencing two JAR family members impairs levels of trypsin proteinase inhibitors but not nicotine.</title>
        <authorList>
            <person name="Wang L."/>
            <person name="Halitschke R."/>
            <person name="Kang J.H."/>
            <person name="Berg A."/>
            <person name="Harnisch F."/>
            <person name="Baldwin I.T."/>
        </authorList>
    </citation>
    <scope>FUNCTION</scope>
    <scope>INDUCTION</scope>
</reference>
<gene>
    <name evidence="4" type="primary">JAR4</name>
    <name evidence="6" type="ORF">A4A49_35910</name>
</gene>
<keyword id="KW-0067">ATP-binding</keyword>
<keyword id="KW-1184">Jasmonic acid signaling pathway</keyword>
<keyword id="KW-0436">Ligase</keyword>
<keyword id="KW-0547">Nucleotide-binding</keyword>
<keyword id="KW-0611">Plant defense</keyword>
<keyword id="KW-1185">Reference proteome</keyword>
<sequence length="577" mass="64648">MKMVVEKTEKFDPEEVIEEFEVLTKDAGKIQEETLQKILEENGGTEYLQQWGLNGKTDSLSFKNCIPIVTHKDLEPYIHRIADGDLSPILTGKPITTISLSSGTTQGKPKFVPFNEELMESTMQIFKTSFVFRNREFPVVNGKALQFIYGSKQFKTKGGLAAGTATTNVYRNAQFKKTMKAMQTPCCSPDEVIFGPDFQQSLYCHLLCGLIFRDEVQVVSSTFAHSIVHAFRNFEQIWQELVTNIREGVLSSRVIVPSMRAAMSKLLKPDPELADTIFNKCSRLSNWYGLIPELFPNTRYIYGIMTGSMEPYLKKLRHYAGDLPLLSADYGSSEGWIGANVNPELPPELVTYAVLPNIGYFEFIPLMENLDGLEPMPVGLTEVKLGEEYEIVVTNFAGLYRYRLGDVVKIKGFHNGTPELQFICRRNLLLSINIDKNTEKDLQLAVEAAAKILSDEKLEVVDFTSHVNVSADPGHYVIFWELNGEASEEILKECCNCLDKSFVDAGYVGSRKVHAIGALELRIVKRGTFHKILDHFVGLGAAVSQFKTPRCVGPTNLSVLQILSSNVVESYFSTAFC</sequence>
<name>JAR4_NICAT</name>
<evidence type="ECO:0000250" key="1">
    <source>
        <dbReference type="UniProtKB" id="Q9SKE2"/>
    </source>
</evidence>
<evidence type="ECO:0000269" key="2">
    <source>
    </source>
</evidence>
<evidence type="ECO:0000269" key="3">
    <source>
    </source>
</evidence>
<evidence type="ECO:0000303" key="4">
    <source>
    </source>
</evidence>
<evidence type="ECO:0000305" key="5"/>
<evidence type="ECO:0000312" key="6">
    <source>
        <dbReference type="EMBL" id="OIT21023.1"/>
    </source>
</evidence>
<feature type="chain" id="PRO_0000446306" description="Jasmonoyl--L-amino acid synthetase JAR4">
    <location>
        <begin position="1"/>
        <end position="577"/>
    </location>
</feature>
<feature type="binding site" evidence="1">
    <location>
        <position position="99"/>
    </location>
    <ligand>
        <name>ATP</name>
        <dbReference type="ChEBI" id="CHEBI:30616"/>
    </ligand>
</feature>
<feature type="binding site" evidence="1">
    <location>
        <position position="102"/>
    </location>
    <ligand>
        <name>jasmonate</name>
        <dbReference type="ChEBI" id="CHEBI:58431"/>
    </ligand>
</feature>
<feature type="binding site" evidence="1">
    <location>
        <position position="119"/>
    </location>
    <ligand>
        <name>ATP</name>
        <dbReference type="ChEBI" id="CHEBI:30616"/>
    </ligand>
</feature>
<feature type="binding site" evidence="1">
    <location>
        <position position="122"/>
    </location>
    <ligand>
        <name>ATP</name>
        <dbReference type="ChEBI" id="CHEBI:30616"/>
    </ligand>
</feature>
<feature type="binding site" evidence="1">
    <location>
        <position position="163"/>
    </location>
    <ligand>
        <name>ATP</name>
        <dbReference type="ChEBI" id="CHEBI:30616"/>
    </ligand>
</feature>
<feature type="binding site" evidence="1">
    <location>
        <begin position="166"/>
        <end position="170"/>
    </location>
    <ligand>
        <name>an L-alpha-amino acid</name>
        <dbReference type="ChEBI" id="CHEBI:59869"/>
    </ligand>
</feature>
<feature type="binding site" evidence="1">
    <location>
        <position position="168"/>
    </location>
    <ligand>
        <name>ATP</name>
        <dbReference type="ChEBI" id="CHEBI:30616"/>
    </ligand>
</feature>
<feature type="binding site" evidence="1">
    <location>
        <begin position="328"/>
        <end position="331"/>
    </location>
    <ligand>
        <name>jasmonate</name>
        <dbReference type="ChEBI" id="CHEBI:58431"/>
    </ligand>
</feature>
<feature type="binding site" evidence="1">
    <location>
        <begin position="331"/>
        <end position="336"/>
    </location>
    <ligand>
        <name>ATP</name>
        <dbReference type="ChEBI" id="CHEBI:30616"/>
    </ligand>
</feature>
<feature type="binding site" evidence="1">
    <location>
        <begin position="531"/>
        <end position="535"/>
    </location>
    <ligand>
        <name>an L-alpha-amino acid</name>
        <dbReference type="ChEBI" id="CHEBI:59869"/>
    </ligand>
</feature>
<feature type="sequence conflict" description="In Ref. 1; ABC87760." evidence="5" ref="1">
    <original>G</original>
    <variation>D</variation>
    <location>
        <position position="359"/>
    </location>
</feature>
<feature type="sequence conflict" description="In Ref. 1; ABC87760." evidence="5" ref="1">
    <original>N</original>
    <variation>K</variation>
    <location>
        <position position="556"/>
    </location>
</feature>
<comment type="function">
    <text evidence="2 3">Catalyzes the synthesis of jasmonate-amino acid conjugates by adenylation (PubMed:17085687, PubMed:17273867). Catalyzes the conjugation of jasmonate (JA) to Ile, Leu and Val (PubMed:17273867). Catalyzes the conjugation of jasmonate (JA) to Ile to mediate defense signaling and resistance to the herbivore Manduca sexta caterpillars (PubMed:17085687).</text>
</comment>
<comment type="catalytic activity">
    <reaction evidence="2">
        <text>a jasmonate + an L-alpha-amino acid + ATP = a jasmonyl-L-amino acid + AMP + diphosphate + H(+)</text>
        <dbReference type="Rhea" id="RHEA:55772"/>
        <dbReference type="ChEBI" id="CHEBI:15378"/>
        <dbReference type="ChEBI" id="CHEBI:30616"/>
        <dbReference type="ChEBI" id="CHEBI:33019"/>
        <dbReference type="ChEBI" id="CHEBI:59869"/>
        <dbReference type="ChEBI" id="CHEBI:136183"/>
        <dbReference type="ChEBI" id="CHEBI:136184"/>
        <dbReference type="ChEBI" id="CHEBI:456215"/>
        <dbReference type="EC" id="6.3.2.52"/>
    </reaction>
</comment>
<comment type="induction">
    <text evidence="2 3">Induced by wounding (PubMed:17085687, PubMed:17273867). Induced by oral secretion of the herbivore Manduca sexta caterpillars (PubMed:17273867). Induced by treatment with JA-Ile (PubMed:17085687).</text>
</comment>
<comment type="similarity">
    <text evidence="5">Belongs to the IAA-amido conjugating enzyme family.</text>
</comment>
<protein>
    <recommendedName>
        <fullName evidence="5">Jasmonoyl--L-amino acid synthetase JAR4</fullName>
        <ecNumber evidence="2">6.3.2.52</ecNumber>
    </recommendedName>
    <alternativeName>
        <fullName evidence="5">Jasmonate-amino acid synthetase JAR4</fullName>
    </alternativeName>
    <alternativeName>
        <fullName evidence="5">Jasmonic acid-amido synthetase JAR4</fullName>
    </alternativeName>
    <alternativeName>
        <fullName evidence="4">Protein JASMONATE RESISTANT 4</fullName>
    </alternativeName>
</protein>
<organism>
    <name type="scientific">Nicotiana attenuata</name>
    <name type="common">Coyote tobacco</name>
    <dbReference type="NCBI Taxonomy" id="49451"/>
    <lineage>
        <taxon>Eukaryota</taxon>
        <taxon>Viridiplantae</taxon>
        <taxon>Streptophyta</taxon>
        <taxon>Embryophyta</taxon>
        <taxon>Tracheophyta</taxon>
        <taxon>Spermatophyta</taxon>
        <taxon>Magnoliopsida</taxon>
        <taxon>eudicotyledons</taxon>
        <taxon>Gunneridae</taxon>
        <taxon>Pentapetalae</taxon>
        <taxon>asterids</taxon>
        <taxon>lamiids</taxon>
        <taxon>Solanales</taxon>
        <taxon>Solanaceae</taxon>
        <taxon>Nicotianoideae</taxon>
        <taxon>Nicotianeae</taxon>
        <taxon>Nicotiana</taxon>
    </lineage>
</organism>
<accession>A0A1J6KGJ9</accession>
<accession>A1BNG5</accession>
<proteinExistence type="evidence at protein level"/>
<dbReference type="EC" id="6.3.2.52" evidence="2"/>
<dbReference type="EMBL" id="DQ359729">
    <property type="protein sequence ID" value="ABC87760.1"/>
    <property type="molecule type" value="mRNA"/>
</dbReference>
<dbReference type="EMBL" id="MJEQ01004674">
    <property type="protein sequence ID" value="OIT21023.1"/>
    <property type="molecule type" value="Genomic_DNA"/>
</dbReference>
<dbReference type="RefSeq" id="XP_019239437.1">
    <property type="nucleotide sequence ID" value="XM_019383892.1"/>
</dbReference>
<dbReference type="SMR" id="A0A1J6KGJ9"/>
<dbReference type="STRING" id="49451.A0A1J6KGJ9"/>
<dbReference type="EnsemblPlants" id="OIT21023">
    <property type="protein sequence ID" value="OIT21023"/>
    <property type="gene ID" value="A4A49_35910"/>
</dbReference>
<dbReference type="GeneID" id="109219431"/>
<dbReference type="Gramene" id="OIT21023">
    <property type="protein sequence ID" value="OIT21023"/>
    <property type="gene ID" value="A4A49_35910"/>
</dbReference>
<dbReference type="OMA" id="HECCNCL"/>
<dbReference type="OrthoDB" id="10004661at2759"/>
<dbReference type="BRENDA" id="6.3.2.52">
    <property type="organism ID" value="9729"/>
</dbReference>
<dbReference type="Proteomes" id="UP000187609">
    <property type="component" value="Unassembled WGS sequence"/>
</dbReference>
<dbReference type="GO" id="GO:0005737">
    <property type="term" value="C:cytoplasm"/>
    <property type="evidence" value="ECO:0007669"/>
    <property type="project" value="TreeGrafter"/>
</dbReference>
<dbReference type="GO" id="GO:0005524">
    <property type="term" value="F:ATP binding"/>
    <property type="evidence" value="ECO:0007669"/>
    <property type="project" value="UniProtKB-KW"/>
</dbReference>
<dbReference type="GO" id="GO:0080123">
    <property type="term" value="F:jasmonoyl-L-amino acid ligase activity"/>
    <property type="evidence" value="ECO:0000314"/>
    <property type="project" value="UniProtKB"/>
</dbReference>
<dbReference type="GO" id="GO:0006952">
    <property type="term" value="P:defense response"/>
    <property type="evidence" value="ECO:0007669"/>
    <property type="project" value="UniProtKB-KW"/>
</dbReference>
<dbReference type="InterPro" id="IPR004993">
    <property type="entry name" value="GH3"/>
</dbReference>
<dbReference type="InterPro" id="IPR055378">
    <property type="entry name" value="GH3_C"/>
</dbReference>
<dbReference type="InterPro" id="IPR055377">
    <property type="entry name" value="GH3_M"/>
</dbReference>
<dbReference type="PANTHER" id="PTHR31901">
    <property type="entry name" value="GH3 DOMAIN-CONTAINING PROTEIN"/>
    <property type="match status" value="1"/>
</dbReference>
<dbReference type="PANTHER" id="PTHR31901:SF5">
    <property type="entry name" value="JASMONOYL--L-AMINO ACID SYNTHETASE JAR1"/>
    <property type="match status" value="1"/>
</dbReference>
<dbReference type="Pfam" id="PF03321">
    <property type="entry name" value="GH3"/>
    <property type="match status" value="1"/>
</dbReference>
<dbReference type="Pfam" id="PF23572">
    <property type="entry name" value="GH3_C"/>
    <property type="match status" value="1"/>
</dbReference>
<dbReference type="Pfam" id="PF23571">
    <property type="entry name" value="GH3_M"/>
    <property type="match status" value="1"/>
</dbReference>